<proteinExistence type="inferred from homology"/>
<evidence type="ECO:0000255" key="1">
    <source>
        <dbReference type="HAMAP-Rule" id="MF_01651"/>
    </source>
</evidence>
<accession>B1XB17</accession>
<reference key="1">
    <citation type="journal article" date="2008" name="J. Bacteriol.">
        <title>The complete genome sequence of Escherichia coli DH10B: insights into the biology of a laboratory workhorse.</title>
        <authorList>
            <person name="Durfee T."/>
            <person name="Nelson R."/>
            <person name="Baldwin S."/>
            <person name="Plunkett G. III"/>
            <person name="Burland V."/>
            <person name="Mau B."/>
            <person name="Petrosino J.F."/>
            <person name="Qin X."/>
            <person name="Muzny D.M."/>
            <person name="Ayele M."/>
            <person name="Gibbs R.A."/>
            <person name="Csorgo B."/>
            <person name="Posfai G."/>
            <person name="Weinstock G.M."/>
            <person name="Blattner F.R."/>
        </authorList>
    </citation>
    <scope>NUCLEOTIDE SEQUENCE [LARGE SCALE GENOMIC DNA]</scope>
    <source>
        <strain>K12 / DH10B</strain>
    </source>
</reference>
<feature type="chain" id="PRO_1000186984" description="3-phenylpropionate/cinnamic acid dioxygenase ferredoxin--NAD(+) reductase component">
    <location>
        <begin position="1"/>
        <end position="400"/>
    </location>
</feature>
<feature type="binding site" evidence="1">
    <location>
        <begin position="5"/>
        <end position="36"/>
    </location>
    <ligand>
        <name>FAD</name>
        <dbReference type="ChEBI" id="CHEBI:57692"/>
    </ligand>
</feature>
<feature type="binding site" evidence="1">
    <location>
        <begin position="146"/>
        <end position="174"/>
    </location>
    <ligand>
        <name>NAD(+)</name>
        <dbReference type="ChEBI" id="CHEBI:57540"/>
    </ligand>
</feature>
<gene>
    <name evidence="1" type="primary">hcaD</name>
    <name type="ordered locus">ECDH10B_2709</name>
</gene>
<protein>
    <recommendedName>
        <fullName evidence="1">3-phenylpropionate/cinnamic acid dioxygenase ferredoxin--NAD(+) reductase component</fullName>
        <ecNumber evidence="1">1.18.1.3</ecNumber>
    </recommendedName>
</protein>
<dbReference type="EC" id="1.18.1.3" evidence="1"/>
<dbReference type="EMBL" id="CP000948">
    <property type="protein sequence ID" value="ACB03694.1"/>
    <property type="molecule type" value="Genomic_DNA"/>
</dbReference>
<dbReference type="RefSeq" id="WP_000660788.1">
    <property type="nucleotide sequence ID" value="NC_010473.1"/>
</dbReference>
<dbReference type="SMR" id="B1XB17"/>
<dbReference type="KEGG" id="ecd:ECDH10B_2709"/>
<dbReference type="HOGENOM" id="CLU_003291_4_0_6"/>
<dbReference type="UniPathway" id="UPA00714"/>
<dbReference type="GO" id="GO:0005737">
    <property type="term" value="C:cytoplasm"/>
    <property type="evidence" value="ECO:0007669"/>
    <property type="project" value="TreeGrafter"/>
</dbReference>
<dbReference type="GO" id="GO:0008695">
    <property type="term" value="F:3-phenylpropionate dioxygenase activity"/>
    <property type="evidence" value="ECO:0007669"/>
    <property type="project" value="UniProtKB-UniRule"/>
</dbReference>
<dbReference type="GO" id="GO:0008860">
    <property type="term" value="F:ferredoxin-NAD+ reductase activity"/>
    <property type="evidence" value="ECO:0007669"/>
    <property type="project" value="UniProtKB-EC"/>
</dbReference>
<dbReference type="GO" id="GO:0016651">
    <property type="term" value="F:oxidoreductase activity, acting on NAD(P)H"/>
    <property type="evidence" value="ECO:0007669"/>
    <property type="project" value="TreeGrafter"/>
</dbReference>
<dbReference type="GO" id="GO:0019380">
    <property type="term" value="P:3-phenylpropionate catabolic process"/>
    <property type="evidence" value="ECO:0007669"/>
    <property type="project" value="UniProtKB-UniRule"/>
</dbReference>
<dbReference type="FunFam" id="3.30.390.30:FF:000010">
    <property type="entry name" value="3-phenylpropionate/cinnamic acid dioxygenase ferredoxin--NAD(+) reductase component"/>
    <property type="match status" value="1"/>
</dbReference>
<dbReference type="FunFam" id="3.50.50.60:FF:000088">
    <property type="entry name" value="3-phenylpropionate/cinnamic acid dioxygenase ferredoxin--NAD(+) reductase component"/>
    <property type="match status" value="1"/>
</dbReference>
<dbReference type="Gene3D" id="3.30.390.30">
    <property type="match status" value="1"/>
</dbReference>
<dbReference type="Gene3D" id="3.50.50.60">
    <property type="entry name" value="FAD/NAD(P)-binding domain"/>
    <property type="match status" value="2"/>
</dbReference>
<dbReference type="HAMAP" id="MF_01651">
    <property type="entry name" value="HcaD"/>
    <property type="match status" value="1"/>
</dbReference>
<dbReference type="InterPro" id="IPR050446">
    <property type="entry name" value="FAD-oxidoreductase/Apoptosis"/>
</dbReference>
<dbReference type="InterPro" id="IPR036188">
    <property type="entry name" value="FAD/NAD-bd_sf"/>
</dbReference>
<dbReference type="InterPro" id="IPR023753">
    <property type="entry name" value="FAD/NAD-binding_dom"/>
</dbReference>
<dbReference type="InterPro" id="IPR016156">
    <property type="entry name" value="FAD/NAD-linked_Rdtase_dimer_sf"/>
</dbReference>
<dbReference type="InterPro" id="IPR023744">
    <property type="entry name" value="HcaD"/>
</dbReference>
<dbReference type="InterPro" id="IPR028202">
    <property type="entry name" value="Reductase_C"/>
</dbReference>
<dbReference type="InterPro" id="IPR053382">
    <property type="entry name" value="Ring-hydroxylating_dioxygenase"/>
</dbReference>
<dbReference type="NCBIfam" id="NF042949">
    <property type="entry name" value="3PPDioc_HcaD"/>
    <property type="match status" value="1"/>
</dbReference>
<dbReference type="NCBIfam" id="NF007286">
    <property type="entry name" value="PRK09754.1"/>
    <property type="match status" value="1"/>
</dbReference>
<dbReference type="PANTHER" id="PTHR43557">
    <property type="entry name" value="APOPTOSIS-INDUCING FACTOR 1"/>
    <property type="match status" value="1"/>
</dbReference>
<dbReference type="PANTHER" id="PTHR43557:SF2">
    <property type="entry name" value="RIESKE DOMAIN-CONTAINING PROTEIN-RELATED"/>
    <property type="match status" value="1"/>
</dbReference>
<dbReference type="Pfam" id="PF07992">
    <property type="entry name" value="Pyr_redox_2"/>
    <property type="match status" value="1"/>
</dbReference>
<dbReference type="Pfam" id="PF14759">
    <property type="entry name" value="Reductase_C"/>
    <property type="match status" value="1"/>
</dbReference>
<dbReference type="PRINTS" id="PR00368">
    <property type="entry name" value="FADPNR"/>
</dbReference>
<dbReference type="PRINTS" id="PR00411">
    <property type="entry name" value="PNDRDTASEI"/>
</dbReference>
<dbReference type="SUPFAM" id="SSF51905">
    <property type="entry name" value="FAD/NAD(P)-binding domain"/>
    <property type="match status" value="1"/>
</dbReference>
<dbReference type="SUPFAM" id="SSF55424">
    <property type="entry name" value="FAD/NAD-linked reductases, dimerisation (C-terminal) domain"/>
    <property type="match status" value="1"/>
</dbReference>
<name>HCAD_ECODH</name>
<organism>
    <name type="scientific">Escherichia coli (strain K12 / DH10B)</name>
    <dbReference type="NCBI Taxonomy" id="316385"/>
    <lineage>
        <taxon>Bacteria</taxon>
        <taxon>Pseudomonadati</taxon>
        <taxon>Pseudomonadota</taxon>
        <taxon>Gammaproteobacteria</taxon>
        <taxon>Enterobacterales</taxon>
        <taxon>Enterobacteriaceae</taxon>
        <taxon>Escherichia</taxon>
    </lineage>
</organism>
<keyword id="KW-0058">Aromatic hydrocarbons catabolism</keyword>
<keyword id="KW-0274">FAD</keyword>
<keyword id="KW-0285">Flavoprotein</keyword>
<keyword id="KW-0520">NAD</keyword>
<keyword id="KW-0560">Oxidoreductase</keyword>
<comment type="function">
    <text evidence="1">Part of the multicomponent 3-phenylpropionate dioxygenase, that converts 3-phenylpropionic acid (PP) and cinnamic acid (CI) into 3-phenylpropionate-dihydrodiol (PP-dihydrodiol) and cinnamic acid-dihydrodiol (CI-dihydrodiol), respectively.</text>
</comment>
<comment type="catalytic activity">
    <reaction evidence="1">
        <text>2 reduced [2Fe-2S]-[ferredoxin] + NAD(+) + H(+) = 2 oxidized [2Fe-2S]-[ferredoxin] + NADH</text>
        <dbReference type="Rhea" id="RHEA:16521"/>
        <dbReference type="Rhea" id="RHEA-COMP:10000"/>
        <dbReference type="Rhea" id="RHEA-COMP:10001"/>
        <dbReference type="ChEBI" id="CHEBI:15378"/>
        <dbReference type="ChEBI" id="CHEBI:33737"/>
        <dbReference type="ChEBI" id="CHEBI:33738"/>
        <dbReference type="ChEBI" id="CHEBI:57540"/>
        <dbReference type="ChEBI" id="CHEBI:57945"/>
        <dbReference type="EC" id="1.18.1.3"/>
    </reaction>
</comment>
<comment type="cofactor">
    <cofactor evidence="1">
        <name>FAD</name>
        <dbReference type="ChEBI" id="CHEBI:57692"/>
    </cofactor>
</comment>
<comment type="pathway">
    <text evidence="1">Aromatic compound metabolism; 3-phenylpropanoate degradation.</text>
</comment>
<comment type="subunit">
    <text evidence="1">This dioxygenase system consists of four proteins: the two subunits of the hydroxylase component (HcaE and HcaF), a ferredoxin (HcaC) and a ferredoxin reductase (HcaD).</text>
</comment>
<comment type="similarity">
    <text evidence="1">Belongs to the bacterial ring-hydroxylating dioxygenase ferredoxin reductase family.</text>
</comment>
<sequence>MKEKTIIIVGGGQAAAMAAASLRQQGFTGELHLFSDERHLPYERPPLSKSMLLEDSPQLQQVLPANWWQENNVHLHSGVTIKTLGRDTRELVLTNGESWHWDQLFIATGAAARPLPLLDALGERCFTLRHAGDAARLREVLQPERSVVIIGAGTIGLELAASATQRRCKVTVIELAATVMGRNAPPPVQRYLLQRHQQAGVRILLNNAIEHVVDGEKVELTLQSGETLQADVVIYGIGISANEQLAREANLDTANGIVIDEACRTCDPAIFAGGDVAITRLDNGALHRCESWENANNQAQIAAAAMLGLPLPLLPPPWFWSDQYSDNLQFIGDMRGDDWLCRGNPETQKAIWFNLQNGVLIGAVTLNQGREIRPIRKWIQSGKTFDAKLLIDENIALKSL</sequence>